<dbReference type="EMBL" id="AK007866">
    <property type="protein sequence ID" value="BAB25317.1"/>
    <property type="molecule type" value="mRNA"/>
</dbReference>
<dbReference type="EMBL" id="AK008267">
    <property type="protein sequence ID" value="BAB25565.1"/>
    <property type="molecule type" value="mRNA"/>
</dbReference>
<dbReference type="EMBL" id="AK010204">
    <property type="protein sequence ID" value="BAB26767.1"/>
    <property type="molecule type" value="mRNA"/>
</dbReference>
<dbReference type="EMBL" id="AK012051">
    <property type="protein sequence ID" value="BAB27993.1"/>
    <property type="molecule type" value="mRNA"/>
</dbReference>
<dbReference type="EMBL" id="BC024335">
    <property type="protein sequence ID" value="AAH24335.1"/>
    <property type="molecule type" value="mRNA"/>
</dbReference>
<dbReference type="CCDS" id="CCDS38411.1">
    <molecule id="Q9CQV7-2"/>
</dbReference>
<dbReference type="CCDS" id="CCDS38412.1">
    <molecule id="Q9CQV7-1"/>
</dbReference>
<dbReference type="CCDS" id="CCDS71233.1">
    <molecule id="Q9CQV7-3"/>
</dbReference>
<dbReference type="RefSeq" id="NP_001021382.1">
    <property type="nucleotide sequence ID" value="NM_001026211.2"/>
</dbReference>
<dbReference type="RefSeq" id="NP_001273901.1">
    <molecule id="Q9CQV7-3"/>
    <property type="nucleotide sequence ID" value="NM_001286972.1"/>
</dbReference>
<dbReference type="RefSeq" id="NP_001273902.1">
    <property type="nucleotide sequence ID" value="NM_001286973.1"/>
</dbReference>
<dbReference type="RefSeq" id="NP_080608.3">
    <molecule id="Q9CQV7-1"/>
    <property type="nucleotide sequence ID" value="NM_026332.4"/>
</dbReference>
<dbReference type="RefSeq" id="XP_003084767.1">
    <property type="nucleotide sequence ID" value="XM_003084719.3"/>
</dbReference>
<dbReference type="SMR" id="Q9CQV7"/>
<dbReference type="BioGRID" id="212388">
    <property type="interactions" value="1"/>
</dbReference>
<dbReference type="FunCoup" id="Q9CQV7">
    <property type="interactions" value="2115"/>
</dbReference>
<dbReference type="STRING" id="10090.ENSMUSP00000011029"/>
<dbReference type="GlyGen" id="Q9CQV7">
    <property type="glycosylation" value="1 site, 1 O-linked glycan (1 site)"/>
</dbReference>
<dbReference type="iPTMnet" id="Q9CQV7"/>
<dbReference type="PhosphoSitePlus" id="Q9CQV7"/>
<dbReference type="jPOST" id="Q9CQV7"/>
<dbReference type="PaxDb" id="10090-ENSMUSP00000011029"/>
<dbReference type="ProteomicsDB" id="260656">
    <molecule id="Q9CQV7-1"/>
</dbReference>
<dbReference type="ProteomicsDB" id="260657">
    <molecule id="Q9CQV7-2"/>
</dbReference>
<dbReference type="ProteomicsDB" id="260658">
    <molecule id="Q9CQV7-3"/>
</dbReference>
<dbReference type="Pumba" id="Q9CQV7"/>
<dbReference type="Antibodypedia" id="33761">
    <property type="antibodies" value="170 antibodies from 27 providers"/>
</dbReference>
<dbReference type="DNASU" id="67713"/>
<dbReference type="Ensembl" id="ENSMUST00000108195.10">
    <molecule id="Q9CQV7-1"/>
    <property type="protein sequence ID" value="ENSMUSP00000103830.4"/>
    <property type="gene ID" value="ENSMUSG00000027679.14"/>
</dbReference>
<dbReference type="Ensembl" id="ENSMUST00000117223.4">
    <molecule id="Q9CQV7-3"/>
    <property type="protein sequence ID" value="ENSMUSP00000113484.2"/>
    <property type="gene ID" value="ENSMUSG00000027679.14"/>
</dbReference>
<dbReference type="GeneID" id="67713"/>
<dbReference type="KEGG" id="mmu:67713"/>
<dbReference type="UCSC" id="uc008oxo.2">
    <molecule id="Q9CQV7-1"/>
    <property type="organism name" value="mouse"/>
</dbReference>
<dbReference type="UCSC" id="uc008oxp.2">
    <molecule id="Q9CQV7-3"/>
    <property type="organism name" value="mouse"/>
</dbReference>
<dbReference type="AGR" id="MGI:1914963"/>
<dbReference type="CTD" id="131118"/>
<dbReference type="MGI" id="MGI:1914963">
    <property type="gene designation" value="Dnajc19"/>
</dbReference>
<dbReference type="VEuPathDB" id="HostDB:ENSMUSG00000027679"/>
<dbReference type="eggNOG" id="KOG0723">
    <property type="taxonomic scope" value="Eukaryota"/>
</dbReference>
<dbReference type="GeneTree" id="ENSGT00940000154384"/>
<dbReference type="HOGENOM" id="CLU_017633_13_3_1"/>
<dbReference type="InParanoid" id="Q9CQV7"/>
<dbReference type="OMA" id="RYLIHAW"/>
<dbReference type="OrthoDB" id="240298at2759"/>
<dbReference type="PhylomeDB" id="Q9CQV7"/>
<dbReference type="BioGRID-ORCS" id="67713">
    <property type="hits" value="3 hits in 78 CRISPR screens"/>
</dbReference>
<dbReference type="CD-CODE" id="CE726F99">
    <property type="entry name" value="Postsynaptic density"/>
</dbReference>
<dbReference type="ChiTaRS" id="Dnajc19">
    <property type="organism name" value="mouse"/>
</dbReference>
<dbReference type="PRO" id="PR:Q9CQV7"/>
<dbReference type="Proteomes" id="UP000000589">
    <property type="component" value="Chromosome 3"/>
</dbReference>
<dbReference type="RNAct" id="Q9CQV7">
    <property type="molecule type" value="protein"/>
</dbReference>
<dbReference type="Bgee" id="ENSMUSG00000027679">
    <property type="expression patterns" value="Expressed in right kidney and 192 other cell types or tissues"/>
</dbReference>
<dbReference type="ExpressionAtlas" id="Q9CQV7">
    <property type="expression patterns" value="baseline and differential"/>
</dbReference>
<dbReference type="GO" id="GO:0098800">
    <property type="term" value="C:inner mitochondrial membrane protein complex"/>
    <property type="evidence" value="ECO:0000314"/>
    <property type="project" value="UniProtKB"/>
</dbReference>
<dbReference type="GO" id="GO:0099617">
    <property type="term" value="C:matrix side of mitochondrial inner membrane"/>
    <property type="evidence" value="ECO:0000314"/>
    <property type="project" value="UniProtKB"/>
</dbReference>
<dbReference type="GO" id="GO:0005739">
    <property type="term" value="C:mitochondrion"/>
    <property type="evidence" value="ECO:0007005"/>
    <property type="project" value="MGI"/>
</dbReference>
<dbReference type="GO" id="GO:0015031">
    <property type="term" value="P:protein transport"/>
    <property type="evidence" value="ECO:0007669"/>
    <property type="project" value="UniProtKB-KW"/>
</dbReference>
<dbReference type="GO" id="GO:1900208">
    <property type="term" value="P:regulation of cardiolipin metabolic process"/>
    <property type="evidence" value="ECO:0000315"/>
    <property type="project" value="UniProtKB"/>
</dbReference>
<dbReference type="CDD" id="cd06257">
    <property type="entry name" value="DnaJ"/>
    <property type="match status" value="1"/>
</dbReference>
<dbReference type="FunFam" id="1.10.287.110:FF:000001">
    <property type="entry name" value="Import inner membrane translocase subunit tim14"/>
    <property type="match status" value="1"/>
</dbReference>
<dbReference type="Gene3D" id="1.10.287.110">
    <property type="entry name" value="DnaJ domain"/>
    <property type="match status" value="1"/>
</dbReference>
<dbReference type="InterPro" id="IPR001623">
    <property type="entry name" value="DnaJ_domain"/>
</dbReference>
<dbReference type="InterPro" id="IPR036869">
    <property type="entry name" value="J_dom_sf"/>
</dbReference>
<dbReference type="PANTHER" id="PTHR12763">
    <property type="match status" value="1"/>
</dbReference>
<dbReference type="PANTHER" id="PTHR12763:SF56">
    <property type="entry name" value="MITOCHONDRIAL IMPORT INNER MEMBRANE TRANSLOCASE SUBUNIT TIM14"/>
    <property type="match status" value="1"/>
</dbReference>
<dbReference type="Pfam" id="PF00226">
    <property type="entry name" value="DnaJ"/>
    <property type="match status" value="1"/>
</dbReference>
<dbReference type="SMART" id="SM00271">
    <property type="entry name" value="DnaJ"/>
    <property type="match status" value="1"/>
</dbReference>
<dbReference type="SUPFAM" id="SSF46565">
    <property type="entry name" value="Chaperone J-domain"/>
    <property type="match status" value="1"/>
</dbReference>
<dbReference type="PROSITE" id="PS50076">
    <property type="entry name" value="DNAJ_2"/>
    <property type="match status" value="1"/>
</dbReference>
<proteinExistence type="evidence at protein level"/>
<protein>
    <recommendedName>
        <fullName evidence="8">Mitochondrial import inner membrane translocase subunit TIM14</fullName>
    </recommendedName>
    <alternativeName>
        <fullName>DnaJ homolog subfamily C member 19</fullName>
    </alternativeName>
</protein>
<sequence>MASTVVAVGLTIAAAGFAGRYVLQAMKHVEPQVKQVFQSLPKSAFGGGYYRGGFEPKMTKREAALILGVSPTANKGKIRDAHRRIMLLNHPDKGGSPYIAAKINEAKDLLEGQAKK</sequence>
<gene>
    <name evidence="9" type="primary">Dnajc19</name>
    <name type="synonym">Tim14</name>
    <name type="synonym">Timm14</name>
</gene>
<keyword id="KW-0007">Acetylation</keyword>
<keyword id="KW-0025">Alternative splicing</keyword>
<keyword id="KW-0143">Chaperone</keyword>
<keyword id="KW-0472">Membrane</keyword>
<keyword id="KW-0496">Mitochondrion</keyword>
<keyword id="KW-0999">Mitochondrion inner membrane</keyword>
<keyword id="KW-0597">Phosphoprotein</keyword>
<keyword id="KW-0653">Protein transport</keyword>
<keyword id="KW-1185">Reference proteome</keyword>
<keyword id="KW-0811">Translocation</keyword>
<keyword id="KW-0812">Transmembrane</keyword>
<keyword id="KW-1133">Transmembrane helix</keyword>
<keyword id="KW-0813">Transport</keyword>
<organism>
    <name type="scientific">Mus musculus</name>
    <name type="common">Mouse</name>
    <dbReference type="NCBI Taxonomy" id="10090"/>
    <lineage>
        <taxon>Eukaryota</taxon>
        <taxon>Metazoa</taxon>
        <taxon>Chordata</taxon>
        <taxon>Craniata</taxon>
        <taxon>Vertebrata</taxon>
        <taxon>Euteleostomi</taxon>
        <taxon>Mammalia</taxon>
        <taxon>Eutheria</taxon>
        <taxon>Euarchontoglires</taxon>
        <taxon>Glires</taxon>
        <taxon>Rodentia</taxon>
        <taxon>Myomorpha</taxon>
        <taxon>Muroidea</taxon>
        <taxon>Muridae</taxon>
        <taxon>Murinae</taxon>
        <taxon>Mus</taxon>
        <taxon>Mus</taxon>
    </lineage>
</organism>
<evidence type="ECO:0000250" key="1">
    <source>
        <dbReference type="UniProtKB" id="Q07914"/>
    </source>
</evidence>
<evidence type="ECO:0000250" key="2">
    <source>
        <dbReference type="UniProtKB" id="Q96DA6"/>
    </source>
</evidence>
<evidence type="ECO:0000255" key="3"/>
<evidence type="ECO:0000255" key="4">
    <source>
        <dbReference type="PROSITE-ProRule" id="PRU00286"/>
    </source>
</evidence>
<evidence type="ECO:0000269" key="5">
    <source>
    </source>
</evidence>
<evidence type="ECO:0000303" key="6">
    <source>
    </source>
</evidence>
<evidence type="ECO:0000303" key="7">
    <source>
    </source>
</evidence>
<evidence type="ECO:0000305" key="8"/>
<evidence type="ECO:0000312" key="9">
    <source>
        <dbReference type="MGI" id="MGI:1914963"/>
    </source>
</evidence>
<accession>Q9CQV7</accession>
<accession>Q8R1N1</accession>
<accession>Q9D896</accession>
<reference key="1">
    <citation type="journal article" date="2005" name="Science">
        <title>The transcriptional landscape of the mammalian genome.</title>
        <authorList>
            <person name="Carninci P."/>
            <person name="Kasukawa T."/>
            <person name="Katayama S."/>
            <person name="Gough J."/>
            <person name="Frith M.C."/>
            <person name="Maeda N."/>
            <person name="Oyama R."/>
            <person name="Ravasi T."/>
            <person name="Lenhard B."/>
            <person name="Wells C."/>
            <person name="Kodzius R."/>
            <person name="Shimokawa K."/>
            <person name="Bajic V.B."/>
            <person name="Brenner S.E."/>
            <person name="Batalov S."/>
            <person name="Forrest A.R."/>
            <person name="Zavolan M."/>
            <person name="Davis M.J."/>
            <person name="Wilming L.G."/>
            <person name="Aidinis V."/>
            <person name="Allen J.E."/>
            <person name="Ambesi-Impiombato A."/>
            <person name="Apweiler R."/>
            <person name="Aturaliya R.N."/>
            <person name="Bailey T.L."/>
            <person name="Bansal M."/>
            <person name="Baxter L."/>
            <person name="Beisel K.W."/>
            <person name="Bersano T."/>
            <person name="Bono H."/>
            <person name="Chalk A.M."/>
            <person name="Chiu K.P."/>
            <person name="Choudhary V."/>
            <person name="Christoffels A."/>
            <person name="Clutterbuck D.R."/>
            <person name="Crowe M.L."/>
            <person name="Dalla E."/>
            <person name="Dalrymple B.P."/>
            <person name="de Bono B."/>
            <person name="Della Gatta G."/>
            <person name="di Bernardo D."/>
            <person name="Down T."/>
            <person name="Engstrom P."/>
            <person name="Fagiolini M."/>
            <person name="Faulkner G."/>
            <person name="Fletcher C.F."/>
            <person name="Fukushima T."/>
            <person name="Furuno M."/>
            <person name="Futaki S."/>
            <person name="Gariboldi M."/>
            <person name="Georgii-Hemming P."/>
            <person name="Gingeras T.R."/>
            <person name="Gojobori T."/>
            <person name="Green R.E."/>
            <person name="Gustincich S."/>
            <person name="Harbers M."/>
            <person name="Hayashi Y."/>
            <person name="Hensch T.K."/>
            <person name="Hirokawa N."/>
            <person name="Hill D."/>
            <person name="Huminiecki L."/>
            <person name="Iacono M."/>
            <person name="Ikeo K."/>
            <person name="Iwama A."/>
            <person name="Ishikawa T."/>
            <person name="Jakt M."/>
            <person name="Kanapin A."/>
            <person name="Katoh M."/>
            <person name="Kawasawa Y."/>
            <person name="Kelso J."/>
            <person name="Kitamura H."/>
            <person name="Kitano H."/>
            <person name="Kollias G."/>
            <person name="Krishnan S.P."/>
            <person name="Kruger A."/>
            <person name="Kummerfeld S.K."/>
            <person name="Kurochkin I.V."/>
            <person name="Lareau L.F."/>
            <person name="Lazarevic D."/>
            <person name="Lipovich L."/>
            <person name="Liu J."/>
            <person name="Liuni S."/>
            <person name="McWilliam S."/>
            <person name="Madan Babu M."/>
            <person name="Madera M."/>
            <person name="Marchionni L."/>
            <person name="Matsuda H."/>
            <person name="Matsuzawa S."/>
            <person name="Miki H."/>
            <person name="Mignone F."/>
            <person name="Miyake S."/>
            <person name="Morris K."/>
            <person name="Mottagui-Tabar S."/>
            <person name="Mulder N."/>
            <person name="Nakano N."/>
            <person name="Nakauchi H."/>
            <person name="Ng P."/>
            <person name="Nilsson R."/>
            <person name="Nishiguchi S."/>
            <person name="Nishikawa S."/>
            <person name="Nori F."/>
            <person name="Ohara O."/>
            <person name="Okazaki Y."/>
            <person name="Orlando V."/>
            <person name="Pang K.C."/>
            <person name="Pavan W.J."/>
            <person name="Pavesi G."/>
            <person name="Pesole G."/>
            <person name="Petrovsky N."/>
            <person name="Piazza S."/>
            <person name="Reed J."/>
            <person name="Reid J.F."/>
            <person name="Ring B.Z."/>
            <person name="Ringwald M."/>
            <person name="Rost B."/>
            <person name="Ruan Y."/>
            <person name="Salzberg S.L."/>
            <person name="Sandelin A."/>
            <person name="Schneider C."/>
            <person name="Schoenbach C."/>
            <person name="Sekiguchi K."/>
            <person name="Semple C.A."/>
            <person name="Seno S."/>
            <person name="Sessa L."/>
            <person name="Sheng Y."/>
            <person name="Shibata Y."/>
            <person name="Shimada H."/>
            <person name="Shimada K."/>
            <person name="Silva D."/>
            <person name="Sinclair B."/>
            <person name="Sperling S."/>
            <person name="Stupka E."/>
            <person name="Sugiura K."/>
            <person name="Sultana R."/>
            <person name="Takenaka Y."/>
            <person name="Taki K."/>
            <person name="Tammoja K."/>
            <person name="Tan S.L."/>
            <person name="Tang S."/>
            <person name="Taylor M.S."/>
            <person name="Tegner J."/>
            <person name="Teichmann S.A."/>
            <person name="Ueda H.R."/>
            <person name="van Nimwegen E."/>
            <person name="Verardo R."/>
            <person name="Wei C.L."/>
            <person name="Yagi K."/>
            <person name="Yamanishi H."/>
            <person name="Zabarovsky E."/>
            <person name="Zhu S."/>
            <person name="Zimmer A."/>
            <person name="Hide W."/>
            <person name="Bult C."/>
            <person name="Grimmond S.M."/>
            <person name="Teasdale R.D."/>
            <person name="Liu E.T."/>
            <person name="Brusic V."/>
            <person name="Quackenbush J."/>
            <person name="Wahlestedt C."/>
            <person name="Mattick J.S."/>
            <person name="Hume D.A."/>
            <person name="Kai C."/>
            <person name="Sasaki D."/>
            <person name="Tomaru Y."/>
            <person name="Fukuda S."/>
            <person name="Kanamori-Katayama M."/>
            <person name="Suzuki M."/>
            <person name="Aoki J."/>
            <person name="Arakawa T."/>
            <person name="Iida J."/>
            <person name="Imamura K."/>
            <person name="Itoh M."/>
            <person name="Kato T."/>
            <person name="Kawaji H."/>
            <person name="Kawagashira N."/>
            <person name="Kawashima T."/>
            <person name="Kojima M."/>
            <person name="Kondo S."/>
            <person name="Konno H."/>
            <person name="Nakano K."/>
            <person name="Ninomiya N."/>
            <person name="Nishio T."/>
            <person name="Okada M."/>
            <person name="Plessy C."/>
            <person name="Shibata K."/>
            <person name="Shiraki T."/>
            <person name="Suzuki S."/>
            <person name="Tagami M."/>
            <person name="Waki K."/>
            <person name="Watahiki A."/>
            <person name="Okamura-Oho Y."/>
            <person name="Suzuki H."/>
            <person name="Kawai J."/>
            <person name="Hayashizaki Y."/>
        </authorList>
    </citation>
    <scope>NUCLEOTIDE SEQUENCE [LARGE SCALE MRNA] (ISOFORMS 1 AND 2)</scope>
    <source>
        <strain>C57BL/6J</strain>
        <tissue>Pancreas</tissue>
        <tissue>Small intestine</tissue>
        <tissue>Tongue</tissue>
    </source>
</reference>
<reference key="2">
    <citation type="journal article" date="2004" name="Genome Res.">
        <title>The status, quality, and expansion of the NIH full-length cDNA project: the Mammalian Gene Collection (MGC).</title>
        <authorList>
            <consortium name="The MGC Project Team"/>
        </authorList>
    </citation>
    <scope>NUCLEOTIDE SEQUENCE [LARGE SCALE MRNA] (ISOFORM 3)</scope>
    <source>
        <strain>FVB/N</strain>
        <tissue>Kidney</tissue>
    </source>
</reference>
<reference key="3">
    <citation type="journal article" date="2010" name="Cell">
        <title>A tissue-specific atlas of mouse protein phosphorylation and expression.</title>
        <authorList>
            <person name="Huttlin E.L."/>
            <person name="Jedrychowski M.P."/>
            <person name="Elias J.E."/>
            <person name="Goswami T."/>
            <person name="Rad R."/>
            <person name="Beausoleil S.A."/>
            <person name="Villen J."/>
            <person name="Haas W."/>
            <person name="Sowa M.E."/>
            <person name="Gygi S.P."/>
        </authorList>
    </citation>
    <scope>IDENTIFICATION BY MASS SPECTROMETRY [LARGE SCALE ANALYSIS]</scope>
    <source>
        <tissue>Brain</tissue>
        <tissue>Brown adipose tissue</tissue>
        <tissue>Heart</tissue>
        <tissue>Kidney</tissue>
        <tissue>Liver</tissue>
        <tissue>Lung</tissue>
    </source>
</reference>
<reference key="4">
    <citation type="journal article" date="2014" name="Cell Metab.">
        <title>DNAJC19, a mitochondrial cochaperone associated with cardiomyopathy, forms a complex with prohibitins to regulate cardiolipin remodeling.</title>
        <authorList>
            <person name="Richter-Dennerlein R."/>
            <person name="Korwitz A."/>
            <person name="Haag M."/>
            <person name="Tatsuta T."/>
            <person name="Dargazanli S."/>
            <person name="Baker M."/>
            <person name="Decker T."/>
            <person name="Lamkemeyer T."/>
            <person name="Rugarli E.I."/>
            <person name="Langer T."/>
        </authorList>
    </citation>
    <scope>FUNCTION</scope>
    <scope>SUBCELLULAR LOCATION</scope>
    <scope>INTERACTION WITH AFG3L2; PAM16 AND PHB2</scope>
    <scope>MUTAGENESIS OF HIS-90</scope>
</reference>
<feature type="initiator methionine" description="Removed" evidence="2">
    <location>
        <position position="1"/>
    </location>
</feature>
<feature type="chain" id="PRO_0000071101" description="Mitochondrial import inner membrane translocase subunit TIM14">
    <location>
        <begin position="2"/>
        <end position="116"/>
    </location>
</feature>
<feature type="topological domain" description="Mitochondrial intermembrane" evidence="3">
    <location>
        <begin position="2"/>
        <end position="3"/>
    </location>
</feature>
<feature type="transmembrane region" description="Helical" evidence="3">
    <location>
        <begin position="4"/>
        <end position="24"/>
    </location>
</feature>
<feature type="topological domain" description="Mitochondrial matrix" evidence="3">
    <location>
        <begin position="25"/>
        <end position="116"/>
    </location>
</feature>
<feature type="domain" description="J" evidence="4">
    <location>
        <begin position="62"/>
        <end position="116"/>
    </location>
</feature>
<feature type="modified residue" description="N-acetylalanine" evidence="2">
    <location>
        <position position="2"/>
    </location>
</feature>
<feature type="modified residue" description="Phosphoserine" evidence="2">
    <location>
        <position position="39"/>
    </location>
</feature>
<feature type="modified residue" description="Phosphoserine" evidence="2">
    <location>
        <position position="70"/>
    </location>
</feature>
<feature type="splice variant" id="VSP_016390" description="In isoform 2." evidence="7">
    <original>GSPYIAAKINEAKDLLEGQAKK</original>
    <variation>PLVEEGLKPIPICRSCSSICRRSILSCSTSYDQNKNPFTVCVCVHSSAHTGIHTPVKPCETTM</variation>
    <location>
        <begin position="95"/>
        <end position="116"/>
    </location>
</feature>
<feature type="splice variant" id="VSP_016391" description="In isoform 3." evidence="6">
    <original>GSPYIAAKINEAKDLLEGQAKK</original>
    <variation>KQLLLLYWTVNGIANSWCYECLCVSSFPVVDHIVVS</variation>
    <location>
        <begin position="95"/>
        <end position="116"/>
    </location>
</feature>
<feature type="mutagenesis site" description="Inhibits cell growth. No effect on interaction with PHB2." evidence="5">
    <original>H</original>
    <variation>Q</variation>
    <location>
        <position position="90"/>
    </location>
</feature>
<comment type="function">
    <text evidence="1 5">Mitochondrial co-chaperone which forms a complex with prohibitins to regulate cardiolipin remodeling (PubMed:24856930). May be a component of the PAM complex, a complex required for the translocation of transit peptide-containing proteins from the inner membrane into the mitochondrial matrix in an ATP-dependent manner. May act as a co-chaperone that stimulate the ATP-dependent activity (By similarity).</text>
</comment>
<comment type="subunit">
    <text evidence="1 5">Interacts with PHB2; the interaction associates DNAJC19 with the prohibitin complex (PubMed:24856930). Interacts with TIMM16/PAM16 (PubMed:24856930). May be a component of the PAM complex at least composed of a mitochondrial HSP70 protein, GRPEL1 or GRPEL2, TIMM44, TIMM16/PAM16 and TIMM14/DNAJC19 (By similarity).</text>
</comment>
<comment type="subcellular location">
    <subcellularLocation>
        <location evidence="5">Mitochondrion inner membrane</location>
        <topology evidence="3">Single-pass membrane protein</topology>
        <orientation evidence="5">Matrix side</orientation>
    </subcellularLocation>
</comment>
<comment type="alternative products">
    <event type="alternative splicing"/>
    <isoform>
        <id>Q9CQV7-1</id>
        <name>1</name>
        <sequence type="displayed"/>
    </isoform>
    <isoform>
        <id>Q9CQV7-2</id>
        <name>2</name>
        <sequence type="described" ref="VSP_016390"/>
    </isoform>
    <isoform>
        <id>Q9CQV7-3</id>
        <name>3</name>
        <sequence type="described" ref="VSP_016391"/>
    </isoform>
</comment>
<comment type="similarity">
    <text evidence="8">Belongs to the TIM14 family.</text>
</comment>
<name>TIM14_MOUSE</name>